<comment type="function">
    <text evidence="2">The central subunit of the protein translocation channel SecYEG. Consists of two halves formed by TMs 1-5 and 6-10. These two domains form a lateral gate at the front which open onto the bilayer between TMs 2 and 7, and are clamped together by SecE at the back. The channel is closed by both a pore ring composed of hydrophobic SecY resides and a short helix (helix 2A) on the extracellular side of the membrane which forms a plug. The plug probably moves laterally to allow the channel to open. The ring and the pore may move independently.</text>
</comment>
<comment type="subunit">
    <text evidence="2">Component of the Sec protein translocase complex. Heterotrimer consisting of alpha (SecY), beta (SecG) and gamma (SecE) subunits. The heterotrimers can form oligomers, although 1 heterotrimer is thought to be able to translocate proteins. Interacts with the ribosome. May interact with SecDF, and other proteins may be involved.</text>
</comment>
<comment type="subcellular location">
    <subcellularLocation>
        <location evidence="2">Cell membrane</location>
        <topology evidence="2">Multi-pass membrane protein</topology>
    </subcellularLocation>
</comment>
<comment type="similarity">
    <text evidence="2">Belongs to the SecY/SEC61-alpha family.</text>
</comment>
<feature type="chain" id="PRO_0000131761" description="Protein translocase subunit SecY">
    <location>
        <begin position="1"/>
        <end position="487"/>
    </location>
</feature>
<feature type="topological domain" description="Cytoplasmic" evidence="1">
    <location>
        <begin position="1"/>
        <end position="20"/>
    </location>
</feature>
<feature type="transmembrane region" description="Helical; Name=Helix 1" evidence="2">
    <location>
        <begin position="21"/>
        <end position="47"/>
    </location>
</feature>
<feature type="topological domain" description="Extracellular" evidence="1">
    <location>
        <begin position="48"/>
        <end position="59"/>
    </location>
</feature>
<feature type="transmembrane region" description="Discontinuously helical; Name=Helix 2" evidence="1">
    <location>
        <begin position="60"/>
        <end position="88"/>
    </location>
</feature>
<feature type="intramembrane region" description="Helical; Name=Helix 2A" evidence="1">
    <location>
        <begin position="60"/>
        <end position="67"/>
    </location>
</feature>
<feature type="intramembrane region" evidence="1">
    <location>
        <begin position="68"/>
        <end position="79"/>
    </location>
</feature>
<feature type="intramembrane region" description="Helical; Name=Helix 2B" evidence="1">
    <location>
        <begin position="80"/>
        <end position="88"/>
    </location>
</feature>
<feature type="topological domain" description="Cytoplasmic" evidence="1">
    <location>
        <begin position="89"/>
        <end position="110"/>
    </location>
</feature>
<feature type="transmembrane region" description="Helical; Name=Helix 3" evidence="2">
    <location>
        <begin position="111"/>
        <end position="135"/>
    </location>
</feature>
<feature type="topological domain" description="Extracellular" evidence="1">
    <location>
        <begin position="136"/>
        <end position="153"/>
    </location>
</feature>
<feature type="transmembrane region" description="Helical; Name=Helix 4" evidence="2">
    <location>
        <begin position="154"/>
        <end position="178"/>
    </location>
</feature>
<feature type="topological domain" description="Cytoplasmic" evidence="1">
    <location>
        <begin position="179"/>
        <end position="184"/>
    </location>
</feature>
<feature type="transmembrane region" description="Helical; Name=Helix 5" evidence="2">
    <location>
        <begin position="185"/>
        <end position="203"/>
    </location>
</feature>
<feature type="topological domain" description="Extracellular" evidence="1">
    <location>
        <begin position="204"/>
        <end position="244"/>
    </location>
</feature>
<feature type="transmembrane region" description="Helical; Name=Helix 6" evidence="2">
    <location>
        <begin position="245"/>
        <end position="266"/>
    </location>
</feature>
<feature type="topological domain" description="Cytoplasmic" evidence="1">
    <location>
        <begin position="267"/>
        <end position="291"/>
    </location>
</feature>
<feature type="transmembrane region" description="Helical; Name=Helix 7" evidence="2">
    <location>
        <begin position="292"/>
        <end position="313"/>
    </location>
</feature>
<feature type="topological domain" description="Extracellular" evidence="1">
    <location>
        <begin position="314"/>
        <end position="364"/>
    </location>
</feature>
<feature type="transmembrane region" description="Helical; Name=Helix 8" evidence="2">
    <location>
        <begin position="365"/>
        <end position="384"/>
    </location>
</feature>
<feature type="topological domain" description="Cytoplasmic" evidence="1">
    <location>
        <begin position="385"/>
        <end position="427"/>
    </location>
</feature>
<feature type="transmembrane region" description="Helical; Name=Helix 9" evidence="2">
    <location>
        <begin position="428"/>
        <end position="446"/>
    </location>
</feature>
<feature type="topological domain" description="Extracellular" evidence="1">
    <location>
        <begin position="447"/>
        <end position="451"/>
    </location>
</feature>
<feature type="transmembrane region" description="Helical; Name=Helix 10" evidence="2">
    <location>
        <begin position="452"/>
        <end position="466"/>
    </location>
</feature>
<feature type="topological domain" description="Cytoplasmic" evidence="1">
    <location>
        <begin position="467"/>
        <end position="487"/>
    </location>
</feature>
<feature type="sequence conflict" description="In Ref. 1; CAA44838." evidence="3" ref="1">
    <original>S</original>
    <variation>T</variation>
    <location>
        <position position="195"/>
    </location>
</feature>
<name>SECY_HALMA</name>
<gene>
    <name evidence="2" type="primary">secY</name>
    <name type="ordered locus">rrnAC1589</name>
</gene>
<reference key="1">
    <citation type="journal article" date="1992" name="Biochim. Biophys. Acta">
        <title>The genes for ribosomal protein L15 and the protein equivalent to secY in the archaebacterium Haloarcula (Halobacterium) marismortui.</title>
        <authorList>
            <person name="Arndt E."/>
        </authorList>
    </citation>
    <scope>NUCLEOTIDE SEQUENCE [GENOMIC DNA]</scope>
</reference>
<reference key="2">
    <citation type="journal article" date="2004" name="Genome Res.">
        <title>Genome sequence of Haloarcula marismortui: a halophilic archaeon from the Dead Sea.</title>
        <authorList>
            <person name="Baliga N.S."/>
            <person name="Bonneau R."/>
            <person name="Facciotti M.T."/>
            <person name="Pan M."/>
            <person name="Glusman G."/>
            <person name="Deutsch E.W."/>
            <person name="Shannon P."/>
            <person name="Chiu Y."/>
            <person name="Weng R.S."/>
            <person name="Gan R.R."/>
            <person name="Hung P."/>
            <person name="Date S.V."/>
            <person name="Marcotte E."/>
            <person name="Hood L."/>
            <person name="Ng W.V."/>
        </authorList>
    </citation>
    <scope>NUCLEOTIDE SEQUENCE [LARGE SCALE GENOMIC DNA]</scope>
    <source>
        <strain>ATCC 43049 / DSM 3752 / JCM 8966 / VKM B-1809</strain>
    </source>
</reference>
<sequence>MSWKDTAEPLLVRMPAVQRPEGHVPFKRKLTWTGGVLLLYFFLTNVKLFGLDIDASQQVFGRFSSILASGQGSIMQLGIGPIVTASIVLQLLGGADLLGLNTQDDPRDQILYQGLQKLLVLVMICLTGLPMVFAGGFLPADTAVANSLGIGTAGVQWLIFAQMFVGGVLILFMDEVISKWGVGSGIGLFIVAGVSQRLVGGLLTAPFLGNSEGIIYTWYLFITGERGTGPVLAADGLQTVLLQGELLGLFTTVLIFAVVVYAESVRVEIPLSNARVKGARGRFPVKLIYASVLPMILVRALQANIQFLGRILNAQLGSMPAFLGTYANGQPTGGLFYFLAPIQSRGDWMWWLEGTAQPVWQILTRVGIDLFVMLVGGAVFAVFWVETTDMGPEATAKQIHNSGMQIPGFRQNVGVIEKVLERYIPQVTVIGGALVGLLAVMANMLGTIGGVSGTGLLLTVSITYKLYEEIAEEQLMEMHPMMRQMFG</sequence>
<keyword id="KW-1003">Cell membrane</keyword>
<keyword id="KW-0472">Membrane</keyword>
<keyword id="KW-0653">Protein transport</keyword>
<keyword id="KW-1185">Reference proteome</keyword>
<keyword id="KW-0811">Translocation</keyword>
<keyword id="KW-0812">Transmembrane</keyword>
<keyword id="KW-1133">Transmembrane helix</keyword>
<keyword id="KW-0813">Transport</keyword>
<organism>
    <name type="scientific">Haloarcula marismortui (strain ATCC 43049 / DSM 3752 / JCM 8966 / VKM B-1809)</name>
    <name type="common">Halobacterium marismortui</name>
    <dbReference type="NCBI Taxonomy" id="272569"/>
    <lineage>
        <taxon>Archaea</taxon>
        <taxon>Methanobacteriati</taxon>
        <taxon>Methanobacteriota</taxon>
        <taxon>Stenosarchaea group</taxon>
        <taxon>Halobacteria</taxon>
        <taxon>Halobacteriales</taxon>
        <taxon>Haloarculaceae</taxon>
        <taxon>Haloarcula</taxon>
    </lineage>
</organism>
<accession>P28542</accession>
<accession>Q5V1U5</accession>
<evidence type="ECO:0000250" key="1"/>
<evidence type="ECO:0000255" key="2">
    <source>
        <dbReference type="HAMAP-Rule" id="MF_01465"/>
    </source>
</evidence>
<evidence type="ECO:0000305" key="3"/>
<protein>
    <recommendedName>
        <fullName evidence="2">Protein translocase subunit SecY</fullName>
    </recommendedName>
    <alternativeName>
        <fullName evidence="2">Protein transport protein SEC61 subunit alpha homolog</fullName>
    </alternativeName>
</protein>
<dbReference type="EMBL" id="X63127">
    <property type="protein sequence ID" value="CAA44838.1"/>
    <property type="molecule type" value="Genomic_DNA"/>
</dbReference>
<dbReference type="EMBL" id="AY596297">
    <property type="protein sequence ID" value="AAV46507.1"/>
    <property type="molecule type" value="Genomic_DNA"/>
</dbReference>
<dbReference type="PIR" id="S22350">
    <property type="entry name" value="S22350"/>
</dbReference>
<dbReference type="RefSeq" id="WP_011223736.1">
    <property type="nucleotide sequence ID" value="NC_006396.1"/>
</dbReference>
<dbReference type="SMR" id="P28542"/>
<dbReference type="STRING" id="272569.rrnAC1589"/>
<dbReference type="TCDB" id="3.A.5.7.1">
    <property type="family name" value="the general secretory pathway (sec) family"/>
</dbReference>
<dbReference type="PaxDb" id="272569-rrnAC1589"/>
<dbReference type="EnsemblBacteria" id="AAV46507">
    <property type="protein sequence ID" value="AAV46507"/>
    <property type="gene ID" value="rrnAC1589"/>
</dbReference>
<dbReference type="GeneID" id="40152554"/>
<dbReference type="KEGG" id="hma:rrnAC1589"/>
<dbReference type="PATRIC" id="fig|272569.17.peg.2278"/>
<dbReference type="eggNOG" id="arCOG04169">
    <property type="taxonomic scope" value="Archaea"/>
</dbReference>
<dbReference type="HOGENOM" id="CLU_031763_3_0_2"/>
<dbReference type="Proteomes" id="UP000001169">
    <property type="component" value="Chromosome I"/>
</dbReference>
<dbReference type="GO" id="GO:0005886">
    <property type="term" value="C:plasma membrane"/>
    <property type="evidence" value="ECO:0007669"/>
    <property type="project" value="UniProtKB-SubCell"/>
</dbReference>
<dbReference type="GO" id="GO:0065002">
    <property type="term" value="P:intracellular protein transmembrane transport"/>
    <property type="evidence" value="ECO:0007669"/>
    <property type="project" value="UniProtKB-UniRule"/>
</dbReference>
<dbReference type="GO" id="GO:0006605">
    <property type="term" value="P:protein targeting"/>
    <property type="evidence" value="ECO:0007669"/>
    <property type="project" value="UniProtKB-UniRule"/>
</dbReference>
<dbReference type="Gene3D" id="1.10.3370.10">
    <property type="entry name" value="SecY subunit domain"/>
    <property type="match status" value="1"/>
</dbReference>
<dbReference type="HAMAP" id="MF_01465">
    <property type="entry name" value="SecY"/>
    <property type="match status" value="1"/>
</dbReference>
<dbReference type="InterPro" id="IPR026593">
    <property type="entry name" value="SecY"/>
</dbReference>
<dbReference type="InterPro" id="IPR002208">
    <property type="entry name" value="SecY/SEC61-alpha"/>
</dbReference>
<dbReference type="InterPro" id="IPR030659">
    <property type="entry name" value="SecY_CS"/>
</dbReference>
<dbReference type="InterPro" id="IPR023201">
    <property type="entry name" value="SecY_dom_sf"/>
</dbReference>
<dbReference type="InterPro" id="IPR019561">
    <property type="entry name" value="Translocon_Sec61/SecY_plug_dom"/>
</dbReference>
<dbReference type="NCBIfam" id="TIGR00967">
    <property type="entry name" value="3a0501s007"/>
    <property type="match status" value="1"/>
</dbReference>
<dbReference type="NCBIfam" id="NF006341">
    <property type="entry name" value="PRK08568.1-5"/>
    <property type="match status" value="1"/>
</dbReference>
<dbReference type="PANTHER" id="PTHR10906">
    <property type="entry name" value="SECY/SEC61-ALPHA FAMILY MEMBER"/>
    <property type="match status" value="1"/>
</dbReference>
<dbReference type="Pfam" id="PF10559">
    <property type="entry name" value="Plug_translocon"/>
    <property type="match status" value="1"/>
</dbReference>
<dbReference type="Pfam" id="PF00344">
    <property type="entry name" value="SecY"/>
    <property type="match status" value="1"/>
</dbReference>
<dbReference type="PIRSF" id="PIRSF004557">
    <property type="entry name" value="SecY"/>
    <property type="match status" value="1"/>
</dbReference>
<dbReference type="PRINTS" id="PR00303">
    <property type="entry name" value="SECYTRNLCASE"/>
</dbReference>
<dbReference type="SUPFAM" id="SSF103491">
    <property type="entry name" value="Preprotein translocase SecY subunit"/>
    <property type="match status" value="1"/>
</dbReference>
<dbReference type="PROSITE" id="PS00755">
    <property type="entry name" value="SECY_1"/>
    <property type="match status" value="1"/>
</dbReference>
<dbReference type="PROSITE" id="PS00756">
    <property type="entry name" value="SECY_2"/>
    <property type="match status" value="1"/>
</dbReference>
<proteinExistence type="inferred from homology"/>